<dbReference type="EMBL" id="CR626927">
    <property type="protein sequence ID" value="CAH09676.1"/>
    <property type="molecule type" value="Genomic_DNA"/>
</dbReference>
<dbReference type="RefSeq" id="WP_005791545.1">
    <property type="nucleotide sequence ID" value="NZ_UFTH01000001.1"/>
</dbReference>
<dbReference type="SMR" id="Q5L8B2"/>
<dbReference type="PaxDb" id="272559-BF9343_3895"/>
<dbReference type="GeneID" id="60368600"/>
<dbReference type="KEGG" id="bfs:BF9343_3895"/>
<dbReference type="eggNOG" id="COG0090">
    <property type="taxonomic scope" value="Bacteria"/>
</dbReference>
<dbReference type="HOGENOM" id="CLU_036235_2_1_10"/>
<dbReference type="Proteomes" id="UP000006731">
    <property type="component" value="Chromosome"/>
</dbReference>
<dbReference type="GO" id="GO:0015934">
    <property type="term" value="C:large ribosomal subunit"/>
    <property type="evidence" value="ECO:0007669"/>
    <property type="project" value="InterPro"/>
</dbReference>
<dbReference type="GO" id="GO:0019843">
    <property type="term" value="F:rRNA binding"/>
    <property type="evidence" value="ECO:0007669"/>
    <property type="project" value="UniProtKB-UniRule"/>
</dbReference>
<dbReference type="GO" id="GO:0003735">
    <property type="term" value="F:structural constituent of ribosome"/>
    <property type="evidence" value="ECO:0007669"/>
    <property type="project" value="InterPro"/>
</dbReference>
<dbReference type="GO" id="GO:0016740">
    <property type="term" value="F:transferase activity"/>
    <property type="evidence" value="ECO:0007669"/>
    <property type="project" value="InterPro"/>
</dbReference>
<dbReference type="GO" id="GO:0002181">
    <property type="term" value="P:cytoplasmic translation"/>
    <property type="evidence" value="ECO:0007669"/>
    <property type="project" value="TreeGrafter"/>
</dbReference>
<dbReference type="FunFam" id="2.30.30.30:FF:000001">
    <property type="entry name" value="50S ribosomal protein L2"/>
    <property type="match status" value="1"/>
</dbReference>
<dbReference type="FunFam" id="2.40.50.140:FF:000003">
    <property type="entry name" value="50S ribosomal protein L2"/>
    <property type="match status" value="1"/>
</dbReference>
<dbReference type="FunFam" id="4.10.950.10:FF:000001">
    <property type="entry name" value="50S ribosomal protein L2"/>
    <property type="match status" value="1"/>
</dbReference>
<dbReference type="Gene3D" id="2.30.30.30">
    <property type="match status" value="1"/>
</dbReference>
<dbReference type="Gene3D" id="2.40.50.140">
    <property type="entry name" value="Nucleic acid-binding proteins"/>
    <property type="match status" value="1"/>
</dbReference>
<dbReference type="Gene3D" id="4.10.950.10">
    <property type="entry name" value="Ribosomal protein L2, domain 3"/>
    <property type="match status" value="1"/>
</dbReference>
<dbReference type="HAMAP" id="MF_01320_B">
    <property type="entry name" value="Ribosomal_uL2_B"/>
    <property type="match status" value="1"/>
</dbReference>
<dbReference type="InterPro" id="IPR012340">
    <property type="entry name" value="NA-bd_OB-fold"/>
</dbReference>
<dbReference type="InterPro" id="IPR014722">
    <property type="entry name" value="Rib_uL2_dom2"/>
</dbReference>
<dbReference type="InterPro" id="IPR002171">
    <property type="entry name" value="Ribosomal_uL2"/>
</dbReference>
<dbReference type="InterPro" id="IPR005880">
    <property type="entry name" value="Ribosomal_uL2_bac/org-type"/>
</dbReference>
<dbReference type="InterPro" id="IPR022669">
    <property type="entry name" value="Ribosomal_uL2_C"/>
</dbReference>
<dbReference type="InterPro" id="IPR022671">
    <property type="entry name" value="Ribosomal_uL2_CS"/>
</dbReference>
<dbReference type="InterPro" id="IPR014726">
    <property type="entry name" value="Ribosomal_uL2_dom3"/>
</dbReference>
<dbReference type="InterPro" id="IPR022666">
    <property type="entry name" value="Ribosomal_uL2_RNA-bd_dom"/>
</dbReference>
<dbReference type="InterPro" id="IPR008991">
    <property type="entry name" value="Translation_prot_SH3-like_sf"/>
</dbReference>
<dbReference type="NCBIfam" id="TIGR01171">
    <property type="entry name" value="rplB_bact"/>
    <property type="match status" value="1"/>
</dbReference>
<dbReference type="PANTHER" id="PTHR13691:SF5">
    <property type="entry name" value="LARGE RIBOSOMAL SUBUNIT PROTEIN UL2M"/>
    <property type="match status" value="1"/>
</dbReference>
<dbReference type="PANTHER" id="PTHR13691">
    <property type="entry name" value="RIBOSOMAL PROTEIN L2"/>
    <property type="match status" value="1"/>
</dbReference>
<dbReference type="Pfam" id="PF00181">
    <property type="entry name" value="Ribosomal_L2"/>
    <property type="match status" value="1"/>
</dbReference>
<dbReference type="Pfam" id="PF03947">
    <property type="entry name" value="Ribosomal_L2_C"/>
    <property type="match status" value="1"/>
</dbReference>
<dbReference type="PIRSF" id="PIRSF002158">
    <property type="entry name" value="Ribosomal_L2"/>
    <property type="match status" value="1"/>
</dbReference>
<dbReference type="SMART" id="SM01383">
    <property type="entry name" value="Ribosomal_L2"/>
    <property type="match status" value="1"/>
</dbReference>
<dbReference type="SMART" id="SM01382">
    <property type="entry name" value="Ribosomal_L2_C"/>
    <property type="match status" value="1"/>
</dbReference>
<dbReference type="SUPFAM" id="SSF50249">
    <property type="entry name" value="Nucleic acid-binding proteins"/>
    <property type="match status" value="1"/>
</dbReference>
<dbReference type="SUPFAM" id="SSF50104">
    <property type="entry name" value="Translation proteins SH3-like domain"/>
    <property type="match status" value="1"/>
</dbReference>
<dbReference type="PROSITE" id="PS00467">
    <property type="entry name" value="RIBOSOMAL_L2"/>
    <property type="match status" value="1"/>
</dbReference>
<feature type="chain" id="PRO_0000237155" description="Large ribosomal subunit protein uL2">
    <location>
        <begin position="1"/>
        <end position="274"/>
    </location>
</feature>
<feature type="region of interest" description="Disordered" evidence="2">
    <location>
        <begin position="195"/>
        <end position="274"/>
    </location>
</feature>
<feature type="compositionally biased region" description="Basic residues" evidence="2">
    <location>
        <begin position="209"/>
        <end position="220"/>
    </location>
</feature>
<feature type="compositionally biased region" description="Basic residues" evidence="2">
    <location>
        <begin position="244"/>
        <end position="264"/>
    </location>
</feature>
<evidence type="ECO:0000255" key="1">
    <source>
        <dbReference type="HAMAP-Rule" id="MF_01320"/>
    </source>
</evidence>
<evidence type="ECO:0000256" key="2">
    <source>
        <dbReference type="SAM" id="MobiDB-lite"/>
    </source>
</evidence>
<evidence type="ECO:0000305" key="3"/>
<protein>
    <recommendedName>
        <fullName evidence="1">Large ribosomal subunit protein uL2</fullName>
    </recommendedName>
    <alternativeName>
        <fullName evidence="3">50S ribosomal protein L2</fullName>
    </alternativeName>
</protein>
<sequence>MAVRKFKPTTPGQRHKIIGTFEEITASVPEKSLVYGKKSSGGRNNEGKMTMRYLGGGHRKVIRIVDFKRNKDGVPAVVKTIEYDPNRSARIALLFYADGEKRYIIAPNGLQVGATLMSGENAAPEIGNALPLQNIPVGTVIHNIELRPGQGAALVRSAGNFAQLTSREGKYCVIKLPSGEVRQILSTCKATIGSVGNSDHGLESSGKAGRSRWQGRRPRNRGVVMNPVDHPMGGGEGRASGGHPRSRKGLYAKGLKTRAPKKQSSKYIIERRKK</sequence>
<comment type="function">
    <text evidence="1">One of the primary rRNA binding proteins. Required for association of the 30S and 50S subunits to form the 70S ribosome, for tRNA binding and peptide bond formation. It has been suggested to have peptidyltransferase activity; this is somewhat controversial. Makes several contacts with the 16S rRNA in the 70S ribosome.</text>
</comment>
<comment type="subunit">
    <text evidence="1">Part of the 50S ribosomal subunit. Forms a bridge to the 30S subunit in the 70S ribosome.</text>
</comment>
<comment type="similarity">
    <text evidence="1">Belongs to the universal ribosomal protein uL2 family.</text>
</comment>
<keyword id="KW-0687">Ribonucleoprotein</keyword>
<keyword id="KW-0689">Ribosomal protein</keyword>
<keyword id="KW-0694">RNA-binding</keyword>
<keyword id="KW-0699">rRNA-binding</keyword>
<reference key="1">
    <citation type="journal article" date="2005" name="Science">
        <title>Extensive DNA inversions in the B. fragilis genome control variable gene expression.</title>
        <authorList>
            <person name="Cerdeno-Tarraga A.-M."/>
            <person name="Patrick S."/>
            <person name="Crossman L.C."/>
            <person name="Blakely G."/>
            <person name="Abratt V."/>
            <person name="Lennard N."/>
            <person name="Poxton I."/>
            <person name="Duerden B."/>
            <person name="Harris B."/>
            <person name="Quail M.A."/>
            <person name="Barron A."/>
            <person name="Clark L."/>
            <person name="Corton C."/>
            <person name="Doggett J."/>
            <person name="Holden M.T.G."/>
            <person name="Larke N."/>
            <person name="Line A."/>
            <person name="Lord A."/>
            <person name="Norbertczak H."/>
            <person name="Ormond D."/>
            <person name="Price C."/>
            <person name="Rabbinowitsch E."/>
            <person name="Woodward J."/>
            <person name="Barrell B.G."/>
            <person name="Parkhill J."/>
        </authorList>
    </citation>
    <scope>NUCLEOTIDE SEQUENCE [LARGE SCALE GENOMIC DNA]</scope>
    <source>
        <strain>ATCC 25285 / DSM 2151 / CCUG 4856 / JCM 11019 / LMG 10263 / NCTC 9343 / Onslow / VPI 2553 / EN-2</strain>
    </source>
</reference>
<proteinExistence type="inferred from homology"/>
<accession>Q5L8B2</accession>
<name>RL2_BACFN</name>
<gene>
    <name evidence="1" type="primary">rplB</name>
    <name type="ordered locus">BF4000</name>
</gene>
<organism>
    <name type="scientific">Bacteroides fragilis (strain ATCC 25285 / DSM 2151 / CCUG 4856 / JCM 11019 / LMG 10263 / NCTC 9343 / Onslow / VPI 2553 / EN-2)</name>
    <dbReference type="NCBI Taxonomy" id="272559"/>
    <lineage>
        <taxon>Bacteria</taxon>
        <taxon>Pseudomonadati</taxon>
        <taxon>Bacteroidota</taxon>
        <taxon>Bacteroidia</taxon>
        <taxon>Bacteroidales</taxon>
        <taxon>Bacteroidaceae</taxon>
        <taxon>Bacteroides</taxon>
    </lineage>
</organism>